<organism>
    <name type="scientific">Rattus norvegicus</name>
    <name type="common">Rat</name>
    <dbReference type="NCBI Taxonomy" id="10116"/>
    <lineage>
        <taxon>Eukaryota</taxon>
        <taxon>Metazoa</taxon>
        <taxon>Chordata</taxon>
        <taxon>Craniata</taxon>
        <taxon>Vertebrata</taxon>
        <taxon>Euteleostomi</taxon>
        <taxon>Mammalia</taxon>
        <taxon>Eutheria</taxon>
        <taxon>Euarchontoglires</taxon>
        <taxon>Glires</taxon>
        <taxon>Rodentia</taxon>
        <taxon>Myomorpha</taxon>
        <taxon>Muroidea</taxon>
        <taxon>Muridae</taxon>
        <taxon>Murinae</taxon>
        <taxon>Rattus</taxon>
    </lineage>
</organism>
<evidence type="ECO:0000250" key="1">
    <source>
        <dbReference type="UniProtKB" id="P13645"/>
    </source>
</evidence>
<evidence type="ECO:0000250" key="2">
    <source>
        <dbReference type="UniProtKB" id="P35527"/>
    </source>
</evidence>
<evidence type="ECO:0000255" key="3"/>
<evidence type="ECO:0000255" key="4">
    <source>
        <dbReference type="PROSITE-ProRule" id="PRU01188"/>
    </source>
</evidence>
<evidence type="ECO:0000256" key="5">
    <source>
        <dbReference type="SAM" id="MobiDB-lite"/>
    </source>
</evidence>
<evidence type="ECO:0000269" key="6">
    <source>
    </source>
</evidence>
<evidence type="ECO:0000305" key="7"/>
<evidence type="ECO:0000312" key="8">
    <source>
        <dbReference type="EMBL" id="AAN05455.1"/>
    </source>
</evidence>
<evidence type="ECO:0000312" key="9">
    <source>
        <dbReference type="RGD" id="628785"/>
    </source>
</evidence>
<gene>
    <name type="primary">Krt9</name>
    <name evidence="9" type="synonym">Krt1-9</name>
</gene>
<proteinExistence type="evidence at protein level"/>
<comment type="function">
    <text evidence="2 6">May serve an important special function either in the mature palmar and plantar skin tissue or in the morphogenetic program of the formation of these tissues. Plays a role in keratin filament assembly (By similarity). May be involved in spermatid nuclear shaping and sperm development.</text>
</comment>
<comment type="subunit">
    <text evidence="7">Heterotetramer of two type I and two type II keratins.</text>
</comment>
<comment type="tissue specificity">
    <text evidence="6">Expressed in the perinuclear ring of spermatid manchettes within testis and in keratinocytes of the suprabasal layer of footpad epidermis (at protein level).</text>
</comment>
<comment type="miscellaneous">
    <text evidence="7">There are two types of cytoskeletal and microfibrillar keratin, I (acidic) and II (neutral to basic) (40-55 and 56-70 kDa, respectively).</text>
</comment>
<comment type="similarity">
    <text evidence="4">Belongs to the intermediate filament family.</text>
</comment>
<reference evidence="7 8" key="1">
    <citation type="journal article" date="2000" name="Dev. Biol.">
        <title>Keratin 9 is a component of the perinuclear ring of the manchette of rat spermatids.</title>
        <authorList>
            <person name="Mochida K."/>
            <person name="Rivkin E."/>
            <person name="Gil M."/>
            <person name="Kierszenbaum A.L."/>
        </authorList>
    </citation>
    <scope>NUCLEOTIDE SEQUENCE [MRNA]</scope>
    <scope>FUNCTION</scope>
    <scope>TISSUE SPECIFICITY</scope>
    <source>
        <strain evidence="8">Sprague-Dawley</strain>
        <tissue evidence="6">Epidermis</tissue>
        <tissue evidence="6">Testis</tissue>
    </source>
</reference>
<sequence>MSFRQISSSFRSSSGSSCGGGGGRGASRGSMRSSFGRSSRAGGESRFGSSSGFGGGGFSACGTGGGGSFGSSYGGGYGRGFSAGSSSGMFGGSSRGCFGGGSGGGFGGGSGGGFGGGFGGGFGGGSGGGEGSILNTNEKVVMQNLNSRLASYMDKVQELEEDNANLEKQIQEWYSRKGNRVFQKDYSHYYNTIEDLKDRIVDLTARNNKALIDMDNTRMTLGDFRVKLEMEQSLPQGVDADINGLQKVLDDINMEKSDLEIQFDSLDDELKALKKSHKEEMNQLTGLNDGDVNVEINVAPSTDLTQVLNDMREEYEHLISKNRQDIEQHYESQMTQIEHQLTNSGPEMETNMKQVSQLQHSVQELNIELQTQLTTKSALEKALEDTKNRYCGQLQQIREQISEMEAQLAQVRAETECQNQEYGLLLSIKTRLEKEIETYRKLLEGGQQDFESSGAGQIGFGSGKGGQRGSGGSYGGGSGDSYEGESGGSYGGGSGGSHGGKSGGSYGGGSSSGGGSGGSYGGGSGGSHGGKSGGSHGGGSGGSYGGGSGSGGESGGSYGGGSGGSHGGQKGGSGGSYEGGSGGSYGGGSGSGGGSGGSYGGGNTRPSQSQSSQIPRLR</sequence>
<name>K1C9_RAT</name>
<keyword id="KW-0175">Coiled coil</keyword>
<keyword id="KW-0403">Intermediate filament</keyword>
<keyword id="KW-0416">Keratin</keyword>
<keyword id="KW-0597">Phosphoprotein</keyword>
<keyword id="KW-1185">Reference proteome</keyword>
<feature type="chain" id="PRO_0000308373" description="Keratin, type I cytoskeletal 9">
    <location>
        <begin position="1"/>
        <end position="618"/>
    </location>
</feature>
<feature type="domain" description="IF rod" evidence="4">
    <location>
        <begin position="138"/>
        <end position="450"/>
    </location>
</feature>
<feature type="region of interest" description="Head" evidence="3">
    <location>
        <begin position="1"/>
        <end position="137"/>
    </location>
</feature>
<feature type="region of interest" description="Disordered" evidence="5">
    <location>
        <begin position="1"/>
        <end position="49"/>
    </location>
</feature>
<feature type="region of interest" description="Coil 1A" evidence="3">
    <location>
        <begin position="138"/>
        <end position="173"/>
    </location>
</feature>
<feature type="region of interest" description="Linker 1" evidence="3">
    <location>
        <begin position="174"/>
        <end position="192"/>
    </location>
</feature>
<feature type="region of interest" description="Coil 1B" evidence="3">
    <location>
        <begin position="193"/>
        <end position="284"/>
    </location>
</feature>
<feature type="region of interest" description="Linker 12" evidence="3">
    <location>
        <begin position="285"/>
        <end position="307"/>
    </location>
</feature>
<feature type="region of interest" description="Coil 2" evidence="3">
    <location>
        <begin position="308"/>
        <end position="446"/>
    </location>
</feature>
<feature type="region of interest" description="Tail" evidence="3">
    <location>
        <begin position="447"/>
        <end position="609"/>
    </location>
</feature>
<feature type="region of interest" description="Disordered" evidence="5">
    <location>
        <begin position="449"/>
        <end position="618"/>
    </location>
</feature>
<feature type="compositionally biased region" description="Low complexity" evidence="5">
    <location>
        <begin position="7"/>
        <end position="16"/>
    </location>
</feature>
<feature type="compositionally biased region" description="Gly residues" evidence="5">
    <location>
        <begin position="17"/>
        <end position="26"/>
    </location>
</feature>
<feature type="compositionally biased region" description="Low complexity" evidence="5">
    <location>
        <begin position="27"/>
        <end position="49"/>
    </location>
</feature>
<feature type="compositionally biased region" description="Gly residues" evidence="5">
    <location>
        <begin position="456"/>
        <end position="603"/>
    </location>
</feature>
<feature type="compositionally biased region" description="Low complexity" evidence="5">
    <location>
        <begin position="607"/>
        <end position="618"/>
    </location>
</feature>
<feature type="modified residue" description="Phosphoserine" evidence="1">
    <location>
        <position position="14"/>
    </location>
</feature>
<feature type="modified residue" description="Phosphoserine" evidence="1">
    <location>
        <position position="17"/>
    </location>
</feature>
<dbReference type="EMBL" id="AY128946">
    <property type="protein sequence ID" value="AAN05455.1"/>
    <property type="molecule type" value="mRNA"/>
</dbReference>
<dbReference type="RefSeq" id="NP_703206.1">
    <property type="nucleotide sequence ID" value="NM_153476.1"/>
</dbReference>
<dbReference type="SMR" id="Q8CIS9"/>
<dbReference type="FunCoup" id="Q8CIS9">
    <property type="interactions" value="152"/>
</dbReference>
<dbReference type="STRING" id="10116.ENSRNOP00000019330"/>
<dbReference type="PhosphoSitePlus" id="Q8CIS9"/>
<dbReference type="PaxDb" id="10116-ENSRNOP00000019330"/>
<dbReference type="GeneID" id="266717"/>
<dbReference type="KEGG" id="rno:266717"/>
<dbReference type="UCSC" id="RGD:628785">
    <property type="organism name" value="rat"/>
</dbReference>
<dbReference type="AGR" id="RGD:628785"/>
<dbReference type="CTD" id="3857"/>
<dbReference type="RGD" id="628785">
    <property type="gene designation" value="Krt9"/>
</dbReference>
<dbReference type="eggNOG" id="ENOG502QTM6">
    <property type="taxonomic scope" value="Eukaryota"/>
</dbReference>
<dbReference type="InParanoid" id="Q8CIS9"/>
<dbReference type="PhylomeDB" id="Q8CIS9"/>
<dbReference type="Reactome" id="R-RNO-6805567">
    <property type="pathway name" value="Keratinization"/>
</dbReference>
<dbReference type="Reactome" id="R-RNO-6809371">
    <property type="pathway name" value="Formation of the cornified envelope"/>
</dbReference>
<dbReference type="PRO" id="PR:Q8CIS9"/>
<dbReference type="Proteomes" id="UP000002494">
    <property type="component" value="Unplaced"/>
</dbReference>
<dbReference type="GO" id="GO:0005856">
    <property type="term" value="C:cytoskeleton"/>
    <property type="evidence" value="ECO:0000318"/>
    <property type="project" value="GO_Central"/>
</dbReference>
<dbReference type="GO" id="GO:0045095">
    <property type="term" value="C:keratin filament"/>
    <property type="evidence" value="ECO:0000314"/>
    <property type="project" value="RGD"/>
</dbReference>
<dbReference type="GO" id="GO:0048471">
    <property type="term" value="C:perinuclear region of cytoplasm"/>
    <property type="evidence" value="ECO:0000314"/>
    <property type="project" value="RGD"/>
</dbReference>
<dbReference type="GO" id="GO:0005200">
    <property type="term" value="F:structural constituent of cytoskeleton"/>
    <property type="evidence" value="ECO:0000303"/>
    <property type="project" value="RGD"/>
</dbReference>
<dbReference type="GO" id="GO:0030855">
    <property type="term" value="P:epithelial cell differentiation"/>
    <property type="evidence" value="ECO:0000318"/>
    <property type="project" value="GO_Central"/>
</dbReference>
<dbReference type="GO" id="GO:0045109">
    <property type="term" value="P:intermediate filament organization"/>
    <property type="evidence" value="ECO:0000250"/>
    <property type="project" value="UniProtKB"/>
</dbReference>
<dbReference type="GO" id="GO:0043588">
    <property type="term" value="P:skin development"/>
    <property type="evidence" value="ECO:0000250"/>
    <property type="project" value="UniProtKB"/>
</dbReference>
<dbReference type="GO" id="GO:0007283">
    <property type="term" value="P:spermatogenesis"/>
    <property type="evidence" value="ECO:0000314"/>
    <property type="project" value="UniProtKB"/>
</dbReference>
<dbReference type="FunFam" id="1.20.5.170:FF:000002">
    <property type="entry name" value="Type I keratin KA11"/>
    <property type="match status" value="1"/>
</dbReference>
<dbReference type="Gene3D" id="1.20.5.170">
    <property type="match status" value="1"/>
</dbReference>
<dbReference type="Gene3D" id="1.20.5.500">
    <property type="entry name" value="Single helix bin"/>
    <property type="match status" value="1"/>
</dbReference>
<dbReference type="Gene3D" id="1.20.5.1160">
    <property type="entry name" value="Vasodilator-stimulated phosphoprotein"/>
    <property type="match status" value="1"/>
</dbReference>
<dbReference type="InterPro" id="IPR018039">
    <property type="entry name" value="IF_conserved"/>
</dbReference>
<dbReference type="InterPro" id="IPR039008">
    <property type="entry name" value="IF_rod_dom"/>
</dbReference>
<dbReference type="InterPro" id="IPR002957">
    <property type="entry name" value="Keratin_I"/>
</dbReference>
<dbReference type="PANTHER" id="PTHR23239">
    <property type="entry name" value="INTERMEDIATE FILAMENT"/>
    <property type="match status" value="1"/>
</dbReference>
<dbReference type="PANTHER" id="PTHR23239:SF96">
    <property type="entry name" value="KERATIN, TYPE I CYTOSKELETAL 9"/>
    <property type="match status" value="1"/>
</dbReference>
<dbReference type="Pfam" id="PF00038">
    <property type="entry name" value="Filament"/>
    <property type="match status" value="1"/>
</dbReference>
<dbReference type="PRINTS" id="PR01248">
    <property type="entry name" value="TYPE1KERATIN"/>
</dbReference>
<dbReference type="SMART" id="SM01391">
    <property type="entry name" value="Filament"/>
    <property type="match status" value="1"/>
</dbReference>
<dbReference type="SUPFAM" id="SSF64593">
    <property type="entry name" value="Intermediate filament protein, coiled coil region"/>
    <property type="match status" value="2"/>
</dbReference>
<dbReference type="PROSITE" id="PS00226">
    <property type="entry name" value="IF_ROD_1"/>
    <property type="match status" value="1"/>
</dbReference>
<dbReference type="PROSITE" id="PS51842">
    <property type="entry name" value="IF_ROD_2"/>
    <property type="match status" value="1"/>
</dbReference>
<accession>Q8CIS9</accession>
<protein>
    <recommendedName>
        <fullName>Keratin, type I cytoskeletal 9</fullName>
    </recommendedName>
    <alternativeName>
        <fullName>Cytokeratin-9</fullName>
        <shortName>CK-9</shortName>
    </alternativeName>
    <alternativeName>
        <fullName>Keratin-9</fullName>
        <shortName>K9</shortName>
    </alternativeName>
    <alternativeName>
        <fullName>Spermatid perinuclear ring manchette protein K9</fullName>
    </alternativeName>
</protein>